<protein>
    <recommendedName>
        <fullName evidence="1">Large ribosomal subunit protein uL14</fullName>
    </recommendedName>
    <alternativeName>
        <fullName evidence="2">50S ribosomal protein L14</fullName>
    </alternativeName>
</protein>
<sequence>MIQQETRLKVADNSGAREVLTIKVLGGSGRKTANIGDVIVCTVKNATPGGVVKKGDVVKAVIVRTKSGVRRNDGSYIKFDENACVIIRDDKGPRGTRIFGPVARELREGNFMKIVSLAPEVL</sequence>
<gene>
    <name evidence="1" type="primary">rplN</name>
    <name type="ordered locus">SaurJH9_2267</name>
</gene>
<name>RL14_STAA9</name>
<accession>A5IV24</accession>
<reference key="1">
    <citation type="submission" date="2007-05" db="EMBL/GenBank/DDBJ databases">
        <title>Complete sequence of chromosome of Staphylococcus aureus subsp. aureus JH9.</title>
        <authorList>
            <consortium name="US DOE Joint Genome Institute"/>
            <person name="Copeland A."/>
            <person name="Lucas S."/>
            <person name="Lapidus A."/>
            <person name="Barry K."/>
            <person name="Detter J.C."/>
            <person name="Glavina del Rio T."/>
            <person name="Hammon N."/>
            <person name="Israni S."/>
            <person name="Pitluck S."/>
            <person name="Chain P."/>
            <person name="Malfatti S."/>
            <person name="Shin M."/>
            <person name="Vergez L."/>
            <person name="Schmutz J."/>
            <person name="Larimer F."/>
            <person name="Land M."/>
            <person name="Hauser L."/>
            <person name="Kyrpides N."/>
            <person name="Kim E."/>
            <person name="Tomasz A."/>
            <person name="Richardson P."/>
        </authorList>
    </citation>
    <scope>NUCLEOTIDE SEQUENCE [LARGE SCALE GENOMIC DNA]</scope>
    <source>
        <strain>JH9</strain>
    </source>
</reference>
<dbReference type="EMBL" id="CP000703">
    <property type="protein sequence ID" value="ABQ50047.1"/>
    <property type="molecule type" value="Genomic_DNA"/>
</dbReference>
<dbReference type="RefSeq" id="WP_000615921.1">
    <property type="nucleotide sequence ID" value="NC_009487.1"/>
</dbReference>
<dbReference type="SMR" id="A5IV24"/>
<dbReference type="GeneID" id="98346552"/>
<dbReference type="KEGG" id="saj:SaurJH9_2267"/>
<dbReference type="HOGENOM" id="CLU_095071_2_1_9"/>
<dbReference type="GO" id="GO:0022625">
    <property type="term" value="C:cytosolic large ribosomal subunit"/>
    <property type="evidence" value="ECO:0007669"/>
    <property type="project" value="TreeGrafter"/>
</dbReference>
<dbReference type="GO" id="GO:0070180">
    <property type="term" value="F:large ribosomal subunit rRNA binding"/>
    <property type="evidence" value="ECO:0007669"/>
    <property type="project" value="TreeGrafter"/>
</dbReference>
<dbReference type="GO" id="GO:0003735">
    <property type="term" value="F:structural constituent of ribosome"/>
    <property type="evidence" value="ECO:0007669"/>
    <property type="project" value="InterPro"/>
</dbReference>
<dbReference type="GO" id="GO:0006412">
    <property type="term" value="P:translation"/>
    <property type="evidence" value="ECO:0007669"/>
    <property type="project" value="UniProtKB-UniRule"/>
</dbReference>
<dbReference type="CDD" id="cd00337">
    <property type="entry name" value="Ribosomal_uL14"/>
    <property type="match status" value="1"/>
</dbReference>
<dbReference type="FunFam" id="2.40.150.20:FF:000001">
    <property type="entry name" value="50S ribosomal protein L14"/>
    <property type="match status" value="1"/>
</dbReference>
<dbReference type="Gene3D" id="2.40.150.20">
    <property type="entry name" value="Ribosomal protein L14"/>
    <property type="match status" value="1"/>
</dbReference>
<dbReference type="HAMAP" id="MF_01367">
    <property type="entry name" value="Ribosomal_uL14"/>
    <property type="match status" value="1"/>
</dbReference>
<dbReference type="InterPro" id="IPR000218">
    <property type="entry name" value="Ribosomal_uL14"/>
</dbReference>
<dbReference type="InterPro" id="IPR005745">
    <property type="entry name" value="Ribosomal_uL14_bac-type"/>
</dbReference>
<dbReference type="InterPro" id="IPR019972">
    <property type="entry name" value="Ribosomal_uL14_CS"/>
</dbReference>
<dbReference type="InterPro" id="IPR036853">
    <property type="entry name" value="Ribosomal_uL14_sf"/>
</dbReference>
<dbReference type="NCBIfam" id="TIGR01067">
    <property type="entry name" value="rplN_bact"/>
    <property type="match status" value="1"/>
</dbReference>
<dbReference type="PANTHER" id="PTHR11761">
    <property type="entry name" value="50S/60S RIBOSOMAL PROTEIN L14/L23"/>
    <property type="match status" value="1"/>
</dbReference>
<dbReference type="PANTHER" id="PTHR11761:SF3">
    <property type="entry name" value="LARGE RIBOSOMAL SUBUNIT PROTEIN UL14M"/>
    <property type="match status" value="1"/>
</dbReference>
<dbReference type="Pfam" id="PF00238">
    <property type="entry name" value="Ribosomal_L14"/>
    <property type="match status" value="1"/>
</dbReference>
<dbReference type="SMART" id="SM01374">
    <property type="entry name" value="Ribosomal_L14"/>
    <property type="match status" value="1"/>
</dbReference>
<dbReference type="SUPFAM" id="SSF50193">
    <property type="entry name" value="Ribosomal protein L14"/>
    <property type="match status" value="1"/>
</dbReference>
<dbReference type="PROSITE" id="PS00049">
    <property type="entry name" value="RIBOSOMAL_L14"/>
    <property type="match status" value="1"/>
</dbReference>
<keyword id="KW-0687">Ribonucleoprotein</keyword>
<keyword id="KW-0689">Ribosomal protein</keyword>
<keyword id="KW-0694">RNA-binding</keyword>
<keyword id="KW-0699">rRNA-binding</keyword>
<proteinExistence type="inferred from homology"/>
<feature type="chain" id="PRO_1000087152" description="Large ribosomal subunit protein uL14">
    <location>
        <begin position="1"/>
        <end position="122"/>
    </location>
</feature>
<evidence type="ECO:0000255" key="1">
    <source>
        <dbReference type="HAMAP-Rule" id="MF_01367"/>
    </source>
</evidence>
<evidence type="ECO:0000305" key="2"/>
<organism>
    <name type="scientific">Staphylococcus aureus (strain JH9)</name>
    <dbReference type="NCBI Taxonomy" id="359786"/>
    <lineage>
        <taxon>Bacteria</taxon>
        <taxon>Bacillati</taxon>
        <taxon>Bacillota</taxon>
        <taxon>Bacilli</taxon>
        <taxon>Bacillales</taxon>
        <taxon>Staphylococcaceae</taxon>
        <taxon>Staphylococcus</taxon>
    </lineage>
</organism>
<comment type="function">
    <text evidence="1">Binds to 23S rRNA. Forms part of two intersubunit bridges in the 70S ribosome.</text>
</comment>
<comment type="subunit">
    <text evidence="1">Part of the 50S ribosomal subunit. Forms a cluster with proteins L3 and L19. In the 70S ribosome, L14 and L19 interact and together make contacts with the 16S rRNA in bridges B5 and B8.</text>
</comment>
<comment type="similarity">
    <text evidence="1">Belongs to the universal ribosomal protein uL14 family.</text>
</comment>